<evidence type="ECO:0000255" key="1">
    <source>
        <dbReference type="HAMAP-Rule" id="MF_00315"/>
    </source>
</evidence>
<proteinExistence type="inferred from homology"/>
<name>DXS_ECO27</name>
<dbReference type="EC" id="2.2.1.7" evidence="1"/>
<dbReference type="EMBL" id="FM180568">
    <property type="protein sequence ID" value="CAS07903.1"/>
    <property type="molecule type" value="Genomic_DNA"/>
</dbReference>
<dbReference type="RefSeq" id="WP_000006814.1">
    <property type="nucleotide sequence ID" value="NC_011601.1"/>
</dbReference>
<dbReference type="SMR" id="B7UJP3"/>
<dbReference type="BindingDB" id="B7UJP3"/>
<dbReference type="ChEMBL" id="CHEMBL3559641"/>
<dbReference type="KEGG" id="ecg:E2348C_0355"/>
<dbReference type="HOGENOM" id="CLU_009227_1_4_6"/>
<dbReference type="UniPathway" id="UPA00064">
    <property type="reaction ID" value="UER00091"/>
</dbReference>
<dbReference type="Proteomes" id="UP000008205">
    <property type="component" value="Chromosome"/>
</dbReference>
<dbReference type="GO" id="GO:0005829">
    <property type="term" value="C:cytosol"/>
    <property type="evidence" value="ECO:0007669"/>
    <property type="project" value="TreeGrafter"/>
</dbReference>
<dbReference type="GO" id="GO:0008661">
    <property type="term" value="F:1-deoxy-D-xylulose-5-phosphate synthase activity"/>
    <property type="evidence" value="ECO:0007669"/>
    <property type="project" value="UniProtKB-UniRule"/>
</dbReference>
<dbReference type="GO" id="GO:0000287">
    <property type="term" value="F:magnesium ion binding"/>
    <property type="evidence" value="ECO:0007669"/>
    <property type="project" value="UniProtKB-UniRule"/>
</dbReference>
<dbReference type="GO" id="GO:0030976">
    <property type="term" value="F:thiamine pyrophosphate binding"/>
    <property type="evidence" value="ECO:0007669"/>
    <property type="project" value="UniProtKB-UniRule"/>
</dbReference>
<dbReference type="GO" id="GO:0052865">
    <property type="term" value="P:1-deoxy-D-xylulose 5-phosphate biosynthetic process"/>
    <property type="evidence" value="ECO:0007669"/>
    <property type="project" value="UniProtKB-UniPathway"/>
</dbReference>
<dbReference type="GO" id="GO:0019288">
    <property type="term" value="P:isopentenyl diphosphate biosynthetic process, methylerythritol 4-phosphate pathway"/>
    <property type="evidence" value="ECO:0007669"/>
    <property type="project" value="TreeGrafter"/>
</dbReference>
<dbReference type="GO" id="GO:0016114">
    <property type="term" value="P:terpenoid biosynthetic process"/>
    <property type="evidence" value="ECO:0007669"/>
    <property type="project" value="UniProtKB-UniRule"/>
</dbReference>
<dbReference type="GO" id="GO:0009228">
    <property type="term" value="P:thiamine biosynthetic process"/>
    <property type="evidence" value="ECO:0007669"/>
    <property type="project" value="UniProtKB-UniRule"/>
</dbReference>
<dbReference type="CDD" id="cd02007">
    <property type="entry name" value="TPP_DXS"/>
    <property type="match status" value="1"/>
</dbReference>
<dbReference type="CDD" id="cd07033">
    <property type="entry name" value="TPP_PYR_DXS_TK_like"/>
    <property type="match status" value="1"/>
</dbReference>
<dbReference type="FunFam" id="3.40.50.920:FF:000002">
    <property type="entry name" value="1-deoxy-D-xylulose-5-phosphate synthase"/>
    <property type="match status" value="1"/>
</dbReference>
<dbReference type="FunFam" id="3.40.50.970:FF:000005">
    <property type="entry name" value="1-deoxy-D-xylulose-5-phosphate synthase"/>
    <property type="match status" value="1"/>
</dbReference>
<dbReference type="Gene3D" id="3.40.50.920">
    <property type="match status" value="1"/>
</dbReference>
<dbReference type="Gene3D" id="3.40.50.970">
    <property type="match status" value="2"/>
</dbReference>
<dbReference type="HAMAP" id="MF_00315">
    <property type="entry name" value="DXP_synth"/>
    <property type="match status" value="1"/>
</dbReference>
<dbReference type="InterPro" id="IPR005477">
    <property type="entry name" value="Dxylulose-5-P_synthase"/>
</dbReference>
<dbReference type="InterPro" id="IPR029061">
    <property type="entry name" value="THDP-binding"/>
</dbReference>
<dbReference type="InterPro" id="IPR009014">
    <property type="entry name" value="Transketo_C/PFOR_II"/>
</dbReference>
<dbReference type="InterPro" id="IPR005475">
    <property type="entry name" value="Transketolase-like_Pyr-bd"/>
</dbReference>
<dbReference type="InterPro" id="IPR020826">
    <property type="entry name" value="Transketolase_BS"/>
</dbReference>
<dbReference type="InterPro" id="IPR033248">
    <property type="entry name" value="Transketolase_C"/>
</dbReference>
<dbReference type="InterPro" id="IPR049557">
    <property type="entry name" value="Transketolase_CS"/>
</dbReference>
<dbReference type="NCBIfam" id="TIGR00204">
    <property type="entry name" value="dxs"/>
    <property type="match status" value="1"/>
</dbReference>
<dbReference type="NCBIfam" id="NF003933">
    <property type="entry name" value="PRK05444.2-2"/>
    <property type="match status" value="1"/>
</dbReference>
<dbReference type="PANTHER" id="PTHR43322">
    <property type="entry name" value="1-D-DEOXYXYLULOSE 5-PHOSPHATE SYNTHASE-RELATED"/>
    <property type="match status" value="1"/>
</dbReference>
<dbReference type="PANTHER" id="PTHR43322:SF5">
    <property type="entry name" value="1-DEOXY-D-XYLULOSE-5-PHOSPHATE SYNTHASE, CHLOROPLASTIC"/>
    <property type="match status" value="1"/>
</dbReference>
<dbReference type="Pfam" id="PF13292">
    <property type="entry name" value="DXP_synthase_N"/>
    <property type="match status" value="1"/>
</dbReference>
<dbReference type="Pfam" id="PF02779">
    <property type="entry name" value="Transket_pyr"/>
    <property type="match status" value="1"/>
</dbReference>
<dbReference type="Pfam" id="PF02780">
    <property type="entry name" value="Transketolase_C"/>
    <property type="match status" value="1"/>
</dbReference>
<dbReference type="SMART" id="SM00861">
    <property type="entry name" value="Transket_pyr"/>
    <property type="match status" value="1"/>
</dbReference>
<dbReference type="SUPFAM" id="SSF52518">
    <property type="entry name" value="Thiamin diphosphate-binding fold (THDP-binding)"/>
    <property type="match status" value="2"/>
</dbReference>
<dbReference type="SUPFAM" id="SSF52922">
    <property type="entry name" value="TK C-terminal domain-like"/>
    <property type="match status" value="1"/>
</dbReference>
<dbReference type="PROSITE" id="PS00801">
    <property type="entry name" value="TRANSKETOLASE_1"/>
    <property type="match status" value="1"/>
</dbReference>
<dbReference type="PROSITE" id="PS00802">
    <property type="entry name" value="TRANSKETOLASE_2"/>
    <property type="match status" value="1"/>
</dbReference>
<sequence>MSFDIAKYPTLALVDSTQELRLLPKESLPKLCDELRRYLLDSVSRSSGHFASGLGTVELTVALHYVYNTPFDQLIWDVGHQAYPHKILTGRRDKIGTIRQKGGLHPFPWRGESEYDVLSVGHSSTSISAGIGIAVAAEKEGKNRRTVCVIGDGAITAGMAFEAMNHAGDIRPDMLVVLNDNEMSISENVGALNNHLAQLLSGKLYSSLREGGKKVFSGVPPIKELLKRTEEHIKGMVVPGTLFEELGFNYIGPVDGHDVLGLITTLKNMRDLKGPQFLHIMTKKGRGYEPAEKDPITFHAVPKFDPSSGCLPKSSGGLPSYSKIFGDWLCETAAKDNKLMAITPAMREGSGMVEFSRKFPDRYFDVAIAEQHAVTFAAGLAIGGYKPIVAIYSTFLQRAYDQVLHDVAIQKLPVLFAIDRAGIVGADGQTHQGAFDLSYLRCIPEMVIMTPSDENECRQMLYTGYHYNDGPSAVRYPRGNAVGVELTPLEKLPIGKGIVKRRGEKLAILNFGTLMPEAAKVAESLNATLVDMRFVKPLDEALILEMAASHEALVTVEENAIMGGAGSGVNEVLMAHRKPVPVLNIGLLDFFIPQGTQEEMRAELGLDATGMEAKIKAWLA</sequence>
<reference key="1">
    <citation type="journal article" date="2009" name="J. Bacteriol.">
        <title>Complete genome sequence and comparative genome analysis of enteropathogenic Escherichia coli O127:H6 strain E2348/69.</title>
        <authorList>
            <person name="Iguchi A."/>
            <person name="Thomson N.R."/>
            <person name="Ogura Y."/>
            <person name="Saunders D."/>
            <person name="Ooka T."/>
            <person name="Henderson I.R."/>
            <person name="Harris D."/>
            <person name="Asadulghani M."/>
            <person name="Kurokawa K."/>
            <person name="Dean P."/>
            <person name="Kenny B."/>
            <person name="Quail M.A."/>
            <person name="Thurston S."/>
            <person name="Dougan G."/>
            <person name="Hayashi T."/>
            <person name="Parkhill J."/>
            <person name="Frankel G."/>
        </authorList>
    </citation>
    <scope>NUCLEOTIDE SEQUENCE [LARGE SCALE GENOMIC DNA]</scope>
    <source>
        <strain>E2348/69 / EPEC</strain>
    </source>
</reference>
<organism>
    <name type="scientific">Escherichia coli O127:H6 (strain E2348/69 / EPEC)</name>
    <dbReference type="NCBI Taxonomy" id="574521"/>
    <lineage>
        <taxon>Bacteria</taxon>
        <taxon>Pseudomonadati</taxon>
        <taxon>Pseudomonadota</taxon>
        <taxon>Gammaproteobacteria</taxon>
        <taxon>Enterobacterales</taxon>
        <taxon>Enterobacteriaceae</taxon>
        <taxon>Escherichia</taxon>
    </lineage>
</organism>
<protein>
    <recommendedName>
        <fullName evidence="1">1-deoxy-D-xylulose-5-phosphate synthase</fullName>
        <ecNumber evidence="1">2.2.1.7</ecNumber>
    </recommendedName>
    <alternativeName>
        <fullName evidence="1">1-deoxyxylulose-5-phosphate synthase</fullName>
        <shortName evidence="1">DXP synthase</shortName>
        <shortName evidence="1">DXPS</shortName>
    </alternativeName>
</protein>
<feature type="chain" id="PRO_1000132932" description="1-deoxy-D-xylulose-5-phosphate synthase">
    <location>
        <begin position="1"/>
        <end position="620"/>
    </location>
</feature>
<feature type="binding site" evidence="1">
    <location>
        <position position="80"/>
    </location>
    <ligand>
        <name>thiamine diphosphate</name>
        <dbReference type="ChEBI" id="CHEBI:58937"/>
    </ligand>
</feature>
<feature type="binding site" evidence="1">
    <location>
        <begin position="121"/>
        <end position="123"/>
    </location>
    <ligand>
        <name>thiamine diphosphate</name>
        <dbReference type="ChEBI" id="CHEBI:58937"/>
    </ligand>
</feature>
<feature type="binding site" evidence="1">
    <location>
        <position position="152"/>
    </location>
    <ligand>
        <name>Mg(2+)</name>
        <dbReference type="ChEBI" id="CHEBI:18420"/>
    </ligand>
</feature>
<feature type="binding site" evidence="1">
    <location>
        <begin position="153"/>
        <end position="154"/>
    </location>
    <ligand>
        <name>thiamine diphosphate</name>
        <dbReference type="ChEBI" id="CHEBI:58937"/>
    </ligand>
</feature>
<feature type="binding site" evidence="1">
    <location>
        <position position="181"/>
    </location>
    <ligand>
        <name>Mg(2+)</name>
        <dbReference type="ChEBI" id="CHEBI:18420"/>
    </ligand>
</feature>
<feature type="binding site" evidence="1">
    <location>
        <position position="181"/>
    </location>
    <ligand>
        <name>thiamine diphosphate</name>
        <dbReference type="ChEBI" id="CHEBI:58937"/>
    </ligand>
</feature>
<feature type="binding site" evidence="1">
    <location>
        <position position="288"/>
    </location>
    <ligand>
        <name>thiamine diphosphate</name>
        <dbReference type="ChEBI" id="CHEBI:58937"/>
    </ligand>
</feature>
<feature type="binding site" evidence="1">
    <location>
        <position position="370"/>
    </location>
    <ligand>
        <name>thiamine diphosphate</name>
        <dbReference type="ChEBI" id="CHEBI:58937"/>
    </ligand>
</feature>
<gene>
    <name evidence="1" type="primary">dxs</name>
    <name type="ordered locus">E2348C_0355</name>
</gene>
<comment type="function">
    <text evidence="1">Catalyzes the acyloin condensation reaction between C atoms 2 and 3 of pyruvate and glyceraldehyde 3-phosphate to yield 1-deoxy-D-xylulose-5-phosphate (DXP).</text>
</comment>
<comment type="catalytic activity">
    <reaction evidence="1">
        <text>D-glyceraldehyde 3-phosphate + pyruvate + H(+) = 1-deoxy-D-xylulose 5-phosphate + CO2</text>
        <dbReference type="Rhea" id="RHEA:12605"/>
        <dbReference type="ChEBI" id="CHEBI:15361"/>
        <dbReference type="ChEBI" id="CHEBI:15378"/>
        <dbReference type="ChEBI" id="CHEBI:16526"/>
        <dbReference type="ChEBI" id="CHEBI:57792"/>
        <dbReference type="ChEBI" id="CHEBI:59776"/>
        <dbReference type="EC" id="2.2.1.7"/>
    </reaction>
</comment>
<comment type="cofactor">
    <cofactor evidence="1">
        <name>Mg(2+)</name>
        <dbReference type="ChEBI" id="CHEBI:18420"/>
    </cofactor>
    <text evidence="1">Binds 1 Mg(2+) ion per subunit.</text>
</comment>
<comment type="cofactor">
    <cofactor evidence="1">
        <name>thiamine diphosphate</name>
        <dbReference type="ChEBI" id="CHEBI:58937"/>
    </cofactor>
    <text evidence="1">Binds 1 thiamine pyrophosphate per subunit.</text>
</comment>
<comment type="pathway">
    <text evidence="1">Metabolic intermediate biosynthesis; 1-deoxy-D-xylulose 5-phosphate biosynthesis; 1-deoxy-D-xylulose 5-phosphate from D-glyceraldehyde 3-phosphate and pyruvate: step 1/1.</text>
</comment>
<comment type="subunit">
    <text evidence="1">Homodimer.</text>
</comment>
<comment type="similarity">
    <text evidence="1">Belongs to the transketolase family. DXPS subfamily.</text>
</comment>
<accession>B7UJP3</accession>
<keyword id="KW-0414">Isoprene biosynthesis</keyword>
<keyword id="KW-0460">Magnesium</keyword>
<keyword id="KW-0479">Metal-binding</keyword>
<keyword id="KW-1185">Reference proteome</keyword>
<keyword id="KW-0784">Thiamine biosynthesis</keyword>
<keyword id="KW-0786">Thiamine pyrophosphate</keyword>
<keyword id="KW-0808">Transferase</keyword>